<sequence length="430" mass="47471">MTSVVVVGTQWGDEGKGKITDFLSSDAEVIARYQGGDNAGHTIVIDNKKFKLHLIPSGIFFPEKISVIGNGVVVNPKSLVKELAYLHEEGVTTDNLRISDRAHVILPYHIKLDQLQEEAKGDNKIGTTIKGIGPAYMDKAARVGIRIADLLDRDIFAERLKTNLAEKNRLFEKMYDSAPIAFDEIFEEYYAYGQEIKKYVTDTSVILNDALDAGKRVLFEGAQGVMLDIDQGTYPFVTSSNPVAGGVTIGSGVGPSKINKVVGVCKAYTSRVGDGPFPTELFDEVGERIREIGHEYGTTTGRPRRVGWFDSVVMRHSRRVSGITNLSLNSIDVLSGLETVKICVAYDLDGKRIDHYPASLEQLKRCKPIYEELPGWSEDITGVRSLEDLPENARNYVRRIGELVGVRISTFSVGPGREQTNILESVWATI</sequence>
<comment type="function">
    <text evidence="1">Plays an important role in the de novo pathway of purine nucleotide biosynthesis. Catalyzes the first committed step in the biosynthesis of AMP from IMP.</text>
</comment>
<comment type="catalytic activity">
    <reaction evidence="1">
        <text>IMP + L-aspartate + GTP = N(6)-(1,2-dicarboxyethyl)-AMP + GDP + phosphate + 2 H(+)</text>
        <dbReference type="Rhea" id="RHEA:15753"/>
        <dbReference type="ChEBI" id="CHEBI:15378"/>
        <dbReference type="ChEBI" id="CHEBI:29991"/>
        <dbReference type="ChEBI" id="CHEBI:37565"/>
        <dbReference type="ChEBI" id="CHEBI:43474"/>
        <dbReference type="ChEBI" id="CHEBI:57567"/>
        <dbReference type="ChEBI" id="CHEBI:58053"/>
        <dbReference type="ChEBI" id="CHEBI:58189"/>
        <dbReference type="EC" id="6.3.4.4"/>
    </reaction>
</comment>
<comment type="cofactor">
    <cofactor evidence="1">
        <name>Mg(2+)</name>
        <dbReference type="ChEBI" id="CHEBI:18420"/>
    </cofactor>
    <text evidence="1">Binds 1 Mg(2+) ion per subunit.</text>
</comment>
<comment type="pathway">
    <text evidence="1">Purine metabolism; AMP biosynthesis via de novo pathway; AMP from IMP: step 1/2.</text>
</comment>
<comment type="subunit">
    <text evidence="1">Homodimer.</text>
</comment>
<comment type="subcellular location">
    <subcellularLocation>
        <location evidence="1">Cytoplasm</location>
    </subcellularLocation>
</comment>
<comment type="similarity">
    <text evidence="1">Belongs to the adenylosuccinate synthetase family.</text>
</comment>
<organism>
    <name type="scientific">Streptococcus equi subsp. equi (strain 4047)</name>
    <dbReference type="NCBI Taxonomy" id="553482"/>
    <lineage>
        <taxon>Bacteria</taxon>
        <taxon>Bacillati</taxon>
        <taxon>Bacillota</taxon>
        <taxon>Bacilli</taxon>
        <taxon>Lactobacillales</taxon>
        <taxon>Streptococcaceae</taxon>
        <taxon>Streptococcus</taxon>
    </lineage>
</organism>
<proteinExistence type="inferred from homology"/>
<feature type="chain" id="PRO_1000194776" description="Adenylosuccinate synthetase">
    <location>
        <begin position="1"/>
        <end position="430"/>
    </location>
</feature>
<feature type="active site" description="Proton acceptor" evidence="1">
    <location>
        <position position="13"/>
    </location>
</feature>
<feature type="active site" description="Proton donor" evidence="1">
    <location>
        <position position="41"/>
    </location>
</feature>
<feature type="binding site" evidence="1">
    <location>
        <begin position="12"/>
        <end position="18"/>
    </location>
    <ligand>
        <name>GTP</name>
        <dbReference type="ChEBI" id="CHEBI:37565"/>
    </ligand>
</feature>
<feature type="binding site" description="in other chain" evidence="1">
    <location>
        <begin position="13"/>
        <end position="16"/>
    </location>
    <ligand>
        <name>IMP</name>
        <dbReference type="ChEBI" id="CHEBI:58053"/>
        <note>ligand shared between dimeric partners</note>
    </ligand>
</feature>
<feature type="binding site" evidence="1">
    <location>
        <position position="13"/>
    </location>
    <ligand>
        <name>Mg(2+)</name>
        <dbReference type="ChEBI" id="CHEBI:18420"/>
    </ligand>
</feature>
<feature type="binding site" description="in other chain" evidence="1">
    <location>
        <begin position="38"/>
        <end position="41"/>
    </location>
    <ligand>
        <name>IMP</name>
        <dbReference type="ChEBI" id="CHEBI:58053"/>
        <note>ligand shared between dimeric partners</note>
    </ligand>
</feature>
<feature type="binding site" evidence="1">
    <location>
        <begin position="40"/>
        <end position="42"/>
    </location>
    <ligand>
        <name>GTP</name>
        <dbReference type="ChEBI" id="CHEBI:37565"/>
    </ligand>
</feature>
<feature type="binding site" evidence="1">
    <location>
        <position position="40"/>
    </location>
    <ligand>
        <name>Mg(2+)</name>
        <dbReference type="ChEBI" id="CHEBI:18420"/>
    </ligand>
</feature>
<feature type="binding site" description="in other chain" evidence="1">
    <location>
        <position position="128"/>
    </location>
    <ligand>
        <name>IMP</name>
        <dbReference type="ChEBI" id="CHEBI:58053"/>
        <note>ligand shared between dimeric partners</note>
    </ligand>
</feature>
<feature type="binding site" evidence="1">
    <location>
        <position position="142"/>
    </location>
    <ligand>
        <name>IMP</name>
        <dbReference type="ChEBI" id="CHEBI:58053"/>
        <note>ligand shared between dimeric partners</note>
    </ligand>
</feature>
<feature type="binding site" description="in other chain" evidence="1">
    <location>
        <position position="223"/>
    </location>
    <ligand>
        <name>IMP</name>
        <dbReference type="ChEBI" id="CHEBI:58053"/>
        <note>ligand shared between dimeric partners</note>
    </ligand>
</feature>
<feature type="binding site" description="in other chain" evidence="1">
    <location>
        <position position="238"/>
    </location>
    <ligand>
        <name>IMP</name>
        <dbReference type="ChEBI" id="CHEBI:58053"/>
        <note>ligand shared between dimeric partners</note>
    </ligand>
</feature>
<feature type="binding site" evidence="1">
    <location>
        <begin position="298"/>
        <end position="304"/>
    </location>
    <ligand>
        <name>substrate</name>
    </ligand>
</feature>
<feature type="binding site" description="in other chain" evidence="1">
    <location>
        <position position="302"/>
    </location>
    <ligand>
        <name>IMP</name>
        <dbReference type="ChEBI" id="CHEBI:58053"/>
        <note>ligand shared between dimeric partners</note>
    </ligand>
</feature>
<feature type="binding site" evidence="1">
    <location>
        <position position="304"/>
    </location>
    <ligand>
        <name>GTP</name>
        <dbReference type="ChEBI" id="CHEBI:37565"/>
    </ligand>
</feature>
<feature type="binding site" evidence="1">
    <location>
        <begin position="330"/>
        <end position="332"/>
    </location>
    <ligand>
        <name>GTP</name>
        <dbReference type="ChEBI" id="CHEBI:37565"/>
    </ligand>
</feature>
<feature type="binding site" evidence="1">
    <location>
        <begin position="412"/>
        <end position="414"/>
    </location>
    <ligand>
        <name>GTP</name>
        <dbReference type="ChEBI" id="CHEBI:37565"/>
    </ligand>
</feature>
<accession>C0MAE4</accession>
<dbReference type="EC" id="6.3.4.4" evidence="1"/>
<dbReference type="EMBL" id="FM204883">
    <property type="protein sequence ID" value="CAW95454.1"/>
    <property type="molecule type" value="Genomic_DNA"/>
</dbReference>
<dbReference type="RefSeq" id="WP_015898639.1">
    <property type="nucleotide sequence ID" value="NC_012471.1"/>
</dbReference>
<dbReference type="SMR" id="C0MAE4"/>
<dbReference type="KEGG" id="seu:SEQ_2113"/>
<dbReference type="HOGENOM" id="CLU_029848_0_0_9"/>
<dbReference type="OrthoDB" id="9807553at2"/>
<dbReference type="UniPathway" id="UPA00075">
    <property type="reaction ID" value="UER00335"/>
</dbReference>
<dbReference type="Proteomes" id="UP000001365">
    <property type="component" value="Chromosome"/>
</dbReference>
<dbReference type="GO" id="GO:0005737">
    <property type="term" value="C:cytoplasm"/>
    <property type="evidence" value="ECO:0007669"/>
    <property type="project" value="UniProtKB-SubCell"/>
</dbReference>
<dbReference type="GO" id="GO:0004019">
    <property type="term" value="F:adenylosuccinate synthase activity"/>
    <property type="evidence" value="ECO:0007669"/>
    <property type="project" value="UniProtKB-UniRule"/>
</dbReference>
<dbReference type="GO" id="GO:0005525">
    <property type="term" value="F:GTP binding"/>
    <property type="evidence" value="ECO:0007669"/>
    <property type="project" value="UniProtKB-UniRule"/>
</dbReference>
<dbReference type="GO" id="GO:0000287">
    <property type="term" value="F:magnesium ion binding"/>
    <property type="evidence" value="ECO:0007669"/>
    <property type="project" value="UniProtKB-UniRule"/>
</dbReference>
<dbReference type="GO" id="GO:0044208">
    <property type="term" value="P:'de novo' AMP biosynthetic process"/>
    <property type="evidence" value="ECO:0007669"/>
    <property type="project" value="UniProtKB-UniRule"/>
</dbReference>
<dbReference type="GO" id="GO:0046040">
    <property type="term" value="P:IMP metabolic process"/>
    <property type="evidence" value="ECO:0007669"/>
    <property type="project" value="TreeGrafter"/>
</dbReference>
<dbReference type="CDD" id="cd03108">
    <property type="entry name" value="AdSS"/>
    <property type="match status" value="1"/>
</dbReference>
<dbReference type="FunFam" id="1.10.300.10:FF:000001">
    <property type="entry name" value="Adenylosuccinate synthetase"/>
    <property type="match status" value="1"/>
</dbReference>
<dbReference type="FunFam" id="3.90.170.10:FF:000001">
    <property type="entry name" value="Adenylosuccinate synthetase"/>
    <property type="match status" value="1"/>
</dbReference>
<dbReference type="Gene3D" id="3.40.440.10">
    <property type="entry name" value="Adenylosuccinate Synthetase, subunit A, domain 1"/>
    <property type="match status" value="1"/>
</dbReference>
<dbReference type="Gene3D" id="1.10.300.10">
    <property type="entry name" value="Adenylosuccinate Synthetase, subunit A, domain 2"/>
    <property type="match status" value="1"/>
</dbReference>
<dbReference type="Gene3D" id="3.90.170.10">
    <property type="entry name" value="Adenylosuccinate Synthetase, subunit A, domain 3"/>
    <property type="match status" value="1"/>
</dbReference>
<dbReference type="HAMAP" id="MF_00011">
    <property type="entry name" value="Adenylosucc_synth"/>
    <property type="match status" value="1"/>
</dbReference>
<dbReference type="InterPro" id="IPR018220">
    <property type="entry name" value="Adenylosuccin_syn_GTP-bd"/>
</dbReference>
<dbReference type="InterPro" id="IPR033128">
    <property type="entry name" value="Adenylosuccin_syn_Lys_AS"/>
</dbReference>
<dbReference type="InterPro" id="IPR042109">
    <property type="entry name" value="Adenylosuccinate_synth_dom1"/>
</dbReference>
<dbReference type="InterPro" id="IPR042110">
    <property type="entry name" value="Adenylosuccinate_synth_dom2"/>
</dbReference>
<dbReference type="InterPro" id="IPR042111">
    <property type="entry name" value="Adenylosuccinate_synth_dom3"/>
</dbReference>
<dbReference type="InterPro" id="IPR001114">
    <property type="entry name" value="Adenylosuccinate_synthetase"/>
</dbReference>
<dbReference type="InterPro" id="IPR027417">
    <property type="entry name" value="P-loop_NTPase"/>
</dbReference>
<dbReference type="NCBIfam" id="NF002223">
    <property type="entry name" value="PRK01117.1"/>
    <property type="match status" value="1"/>
</dbReference>
<dbReference type="NCBIfam" id="TIGR00184">
    <property type="entry name" value="purA"/>
    <property type="match status" value="1"/>
</dbReference>
<dbReference type="PANTHER" id="PTHR11846">
    <property type="entry name" value="ADENYLOSUCCINATE SYNTHETASE"/>
    <property type="match status" value="1"/>
</dbReference>
<dbReference type="PANTHER" id="PTHR11846:SF0">
    <property type="entry name" value="ADENYLOSUCCINATE SYNTHETASE"/>
    <property type="match status" value="1"/>
</dbReference>
<dbReference type="Pfam" id="PF00709">
    <property type="entry name" value="Adenylsucc_synt"/>
    <property type="match status" value="1"/>
</dbReference>
<dbReference type="SMART" id="SM00788">
    <property type="entry name" value="Adenylsucc_synt"/>
    <property type="match status" value="1"/>
</dbReference>
<dbReference type="SUPFAM" id="SSF52540">
    <property type="entry name" value="P-loop containing nucleoside triphosphate hydrolases"/>
    <property type="match status" value="1"/>
</dbReference>
<dbReference type="PROSITE" id="PS01266">
    <property type="entry name" value="ADENYLOSUCCIN_SYN_1"/>
    <property type="match status" value="1"/>
</dbReference>
<dbReference type="PROSITE" id="PS00513">
    <property type="entry name" value="ADENYLOSUCCIN_SYN_2"/>
    <property type="match status" value="1"/>
</dbReference>
<evidence type="ECO:0000255" key="1">
    <source>
        <dbReference type="HAMAP-Rule" id="MF_00011"/>
    </source>
</evidence>
<name>PURA_STRE4</name>
<protein>
    <recommendedName>
        <fullName evidence="1">Adenylosuccinate synthetase</fullName>
        <shortName evidence="1">AMPSase</shortName>
        <shortName evidence="1">AdSS</shortName>
        <ecNumber evidence="1">6.3.4.4</ecNumber>
    </recommendedName>
    <alternativeName>
        <fullName evidence="1">IMP--aspartate ligase</fullName>
    </alternativeName>
</protein>
<reference key="1">
    <citation type="journal article" date="2009" name="PLoS Pathog.">
        <title>Genomic evidence for the evolution of Streptococcus equi: host restriction, increased virulence, and genetic exchange with human pathogens.</title>
        <authorList>
            <person name="Holden M.T.G."/>
            <person name="Heather Z."/>
            <person name="Paillot R."/>
            <person name="Steward K.F."/>
            <person name="Webb K."/>
            <person name="Ainslie F."/>
            <person name="Jourdan T."/>
            <person name="Bason N.C."/>
            <person name="Holroyd N.E."/>
            <person name="Mungall K."/>
            <person name="Quail M.A."/>
            <person name="Sanders M."/>
            <person name="Simmonds M."/>
            <person name="Willey D."/>
            <person name="Brooks K."/>
            <person name="Aanensen D.M."/>
            <person name="Spratt B.G."/>
            <person name="Jolley K.A."/>
            <person name="Maiden M.C.J."/>
            <person name="Kehoe M."/>
            <person name="Chanter N."/>
            <person name="Bentley S.D."/>
            <person name="Robinson C."/>
            <person name="Maskell D.J."/>
            <person name="Parkhill J."/>
            <person name="Waller A.S."/>
        </authorList>
    </citation>
    <scope>NUCLEOTIDE SEQUENCE [LARGE SCALE GENOMIC DNA]</scope>
    <source>
        <strain>4047</strain>
    </source>
</reference>
<keyword id="KW-0963">Cytoplasm</keyword>
<keyword id="KW-0342">GTP-binding</keyword>
<keyword id="KW-0436">Ligase</keyword>
<keyword id="KW-0460">Magnesium</keyword>
<keyword id="KW-0479">Metal-binding</keyword>
<keyword id="KW-0547">Nucleotide-binding</keyword>
<keyword id="KW-0658">Purine biosynthesis</keyword>
<gene>
    <name evidence="1" type="primary">purA</name>
    <name type="ordered locus">SEQ_2113</name>
</gene>